<comment type="subcellular location">
    <subcellularLocation>
        <location>Virion</location>
    </subcellularLocation>
    <text>Region spanning the nucleocapsid and envelope.</text>
</comment>
<comment type="developmental stage">
    <text>Associated with the polyhedron-derived virus (occluded virus).</text>
</comment>
<comment type="similarity">
    <text evidence="2">Belongs to the baculoviridae gp41 family.</text>
</comment>
<keyword id="KW-0325">Glycoprotein</keyword>
<keyword id="KW-0426">Late protein</keyword>
<keyword id="KW-0946">Virion</keyword>
<sequence>MSLPHAVTTALQHQQHQKQLQESSSDAWTNKCVDYVERIIRFYRTNDMSHLTPQMIMLINTIRDLCVESHPISVNVVKRFDSDENLIKHYSRLRKELGGSEVAENIFQPSFVYNVLPSYAQKFYNKGAENVSGDSVSEAAHELGEALQYQIAEAVASNTPIPLPVRHQLVNTYITLLLQRANIPPNVQDAVSSRKYPTLNIINDLINNVIDDVFTGVYGNYYYYVLNEKNRARIVTLKENIGFLAPLSASTDIFQYIANLATRAGKRPSLFQGATFLNAPSSNGSNVEQNRTSCQQSLTELAFQNEALRRYIFQKLSYKQNY</sequence>
<organism>
    <name type="scientific">Heliothis zea nuclear polyhedrosis virus</name>
    <name type="common">HzSNPV</name>
    <name type="synonym">Helicoverpa zea single nucleocapsid nuclear polyhedrosis virus</name>
    <dbReference type="NCBI Taxonomy" id="28290"/>
    <lineage>
        <taxon>Viruses</taxon>
        <taxon>Viruses incertae sedis</taxon>
        <taxon>Naldaviricetes</taxon>
        <taxon>Lefavirales</taxon>
        <taxon>Baculoviridae</taxon>
        <taxon>Alphabaculovirus</taxon>
    </lineage>
</organism>
<name>VP40_NPVHZ</name>
<proteinExistence type="evidence at transcript level"/>
<evidence type="ECO:0000255" key="1"/>
<evidence type="ECO:0000305" key="2"/>
<protein>
    <recommendedName>
        <fullName>Structural glycoprotein p40</fullName>
    </recommendedName>
</protein>
<feature type="chain" id="PRO_0000132905" description="Structural glycoprotein p40">
    <location>
        <begin position="1"/>
        <end position="322"/>
    </location>
</feature>
<feature type="glycosylation site" description="N-linked (GlcNAc...) asparagine; by host" evidence="1">
    <location>
        <position position="130"/>
    </location>
</feature>
<feature type="glycosylation site" description="N-linked (GlcNAc...) asparagine; by host" evidence="1">
    <location>
        <position position="283"/>
    </location>
</feature>
<feature type="glycosylation site" description="N-linked (GlcNAc...) asparagine; by host" evidence="1">
    <location>
        <position position="290"/>
    </location>
</feature>
<reference key="1">
    <citation type="journal article" date="1993" name="Virology">
        <title>Cloning and sequence analysis of a p40 structural protein gene of Helicoverpa zea nuclear polyhedrosis virus.</title>
        <authorList>
            <person name="Ma S.-W."/>
            <person name="Corsaro B.G."/>
            <person name="Klebba P.E."/>
            <person name="Fraser M.J."/>
        </authorList>
    </citation>
    <scope>NUCLEOTIDE SEQUENCE [GENOMIC DNA]</scope>
    <source>
        <strain>Isolate HZS-15</strain>
    </source>
</reference>
<organismHost>
    <name type="scientific">Lepidoptera</name>
    <name type="common">butterflies and moths</name>
    <dbReference type="NCBI Taxonomy" id="7088"/>
</organismHost>
<accession>P36345</accession>
<gene>
    <name type="primary">P40</name>
</gene>
<dbReference type="EMBL" id="L04747">
    <property type="protein sequence ID" value="AAA46747.1"/>
    <property type="molecule type" value="Genomic_DNA"/>
</dbReference>
<dbReference type="EMBL" id="L04748">
    <property type="protein sequence ID" value="AAA46748.1"/>
    <property type="molecule type" value="Genomic_DNA"/>
</dbReference>
<dbReference type="GlyCosmos" id="P36345">
    <property type="glycosylation" value="3 sites, No reported glycans"/>
</dbReference>
<dbReference type="GO" id="GO:0044423">
    <property type="term" value="C:virion component"/>
    <property type="evidence" value="ECO:0007669"/>
    <property type="project" value="UniProtKB-KW"/>
</dbReference>
<dbReference type="GO" id="GO:0005198">
    <property type="term" value="F:structural molecule activity"/>
    <property type="evidence" value="ECO:0007669"/>
    <property type="project" value="InterPro"/>
</dbReference>
<dbReference type="InterPro" id="IPR006790">
    <property type="entry name" value="Baculovirus_Gp41"/>
</dbReference>
<dbReference type="Pfam" id="PF04700">
    <property type="entry name" value="Baculo_gp41"/>
    <property type="match status" value="1"/>
</dbReference>